<sequence>MSTSLPLRDDGAVRASFALALFVLLGLGLGYSLVATGITSALMPDQAHGSLLRADGRVIGSSLVAQPFADARYFQPRPSAAKYDPTAAAGSNQARSNPELLARIATARAEIAQRDGIAPDAVPGELLTQSGSGLDPHLSPAGAQVQLRRVAAARGWPEQRVAALLQAATEQPQFGLLGQPRINVLALNLALDRAGDGVPGTENGVEQQR</sequence>
<comment type="function">
    <text evidence="1">Part of the high-affinity ATP-driven potassium transport (or Kdp) system, which catalyzes the hydrolysis of ATP coupled with the electrogenic transport of potassium into the cytoplasm. This subunit acts as a catalytic chaperone that increases the ATP-binding affinity of the ATP-hydrolyzing subunit KdpB by the formation of a transient KdpB/KdpC/ATP ternary complex.</text>
</comment>
<comment type="subunit">
    <text evidence="1">The system is composed of three essential subunits: KdpA, KdpB and KdpC.</text>
</comment>
<comment type="subcellular location">
    <subcellularLocation>
        <location evidence="1">Cell inner membrane</location>
        <topology evidence="1">Single-pass membrane protein</topology>
    </subcellularLocation>
</comment>
<comment type="similarity">
    <text evidence="1">Belongs to the KdpC family.</text>
</comment>
<feature type="chain" id="PRO_0000197023" description="Potassium-transporting ATPase KdpC subunit">
    <location>
        <begin position="1"/>
        <end position="209"/>
    </location>
</feature>
<feature type="transmembrane region" description="Helical" evidence="1">
    <location>
        <begin position="18"/>
        <end position="38"/>
    </location>
</feature>
<keyword id="KW-0067">ATP-binding</keyword>
<keyword id="KW-0997">Cell inner membrane</keyword>
<keyword id="KW-1003">Cell membrane</keyword>
<keyword id="KW-0406">Ion transport</keyword>
<keyword id="KW-0472">Membrane</keyword>
<keyword id="KW-0547">Nucleotide-binding</keyword>
<keyword id="KW-0630">Potassium</keyword>
<keyword id="KW-0633">Potassium transport</keyword>
<keyword id="KW-1185">Reference proteome</keyword>
<keyword id="KW-0812">Transmembrane</keyword>
<keyword id="KW-1133">Transmembrane helix</keyword>
<keyword id="KW-0813">Transport</keyword>
<organism>
    <name type="scientific">Xanthomonas campestris pv. campestris (strain ATCC 33913 / DSM 3586 / NCPPB 528 / LMG 568 / P 25)</name>
    <dbReference type="NCBI Taxonomy" id="190485"/>
    <lineage>
        <taxon>Bacteria</taxon>
        <taxon>Pseudomonadati</taxon>
        <taxon>Pseudomonadota</taxon>
        <taxon>Gammaproteobacteria</taxon>
        <taxon>Lysobacterales</taxon>
        <taxon>Lysobacteraceae</taxon>
        <taxon>Xanthomonas</taxon>
    </lineage>
</organism>
<evidence type="ECO:0000255" key="1">
    <source>
        <dbReference type="HAMAP-Rule" id="MF_00276"/>
    </source>
</evidence>
<reference key="1">
    <citation type="journal article" date="2002" name="Nature">
        <title>Comparison of the genomes of two Xanthomonas pathogens with differing host specificities.</title>
        <authorList>
            <person name="da Silva A.C.R."/>
            <person name="Ferro J.A."/>
            <person name="Reinach F.C."/>
            <person name="Farah C.S."/>
            <person name="Furlan L.R."/>
            <person name="Quaggio R.B."/>
            <person name="Monteiro-Vitorello C.B."/>
            <person name="Van Sluys M.A."/>
            <person name="Almeida N.F. Jr."/>
            <person name="Alves L.M.C."/>
            <person name="do Amaral A.M."/>
            <person name="Bertolini M.C."/>
            <person name="Camargo L.E.A."/>
            <person name="Camarotte G."/>
            <person name="Cannavan F."/>
            <person name="Cardozo J."/>
            <person name="Chambergo F."/>
            <person name="Ciapina L.P."/>
            <person name="Cicarelli R.M.B."/>
            <person name="Coutinho L.L."/>
            <person name="Cursino-Santos J.R."/>
            <person name="El-Dorry H."/>
            <person name="Faria J.B."/>
            <person name="Ferreira A.J.S."/>
            <person name="Ferreira R.C.C."/>
            <person name="Ferro M.I.T."/>
            <person name="Formighieri E.F."/>
            <person name="Franco M.C."/>
            <person name="Greggio C.C."/>
            <person name="Gruber A."/>
            <person name="Katsuyama A.M."/>
            <person name="Kishi L.T."/>
            <person name="Leite R.P."/>
            <person name="Lemos E.G.M."/>
            <person name="Lemos M.V.F."/>
            <person name="Locali E.C."/>
            <person name="Machado M.A."/>
            <person name="Madeira A.M.B.N."/>
            <person name="Martinez-Rossi N.M."/>
            <person name="Martins E.C."/>
            <person name="Meidanis J."/>
            <person name="Menck C.F.M."/>
            <person name="Miyaki C.Y."/>
            <person name="Moon D.H."/>
            <person name="Moreira L.M."/>
            <person name="Novo M.T.M."/>
            <person name="Okura V.K."/>
            <person name="Oliveira M.C."/>
            <person name="Oliveira V.R."/>
            <person name="Pereira H.A."/>
            <person name="Rossi A."/>
            <person name="Sena J.A.D."/>
            <person name="Silva C."/>
            <person name="de Souza R.F."/>
            <person name="Spinola L.A.F."/>
            <person name="Takita M.A."/>
            <person name="Tamura R.E."/>
            <person name="Teixeira E.C."/>
            <person name="Tezza R.I.D."/>
            <person name="Trindade dos Santos M."/>
            <person name="Truffi D."/>
            <person name="Tsai S.M."/>
            <person name="White F.F."/>
            <person name="Setubal J.C."/>
            <person name="Kitajima J.P."/>
        </authorList>
    </citation>
    <scope>NUCLEOTIDE SEQUENCE [LARGE SCALE GENOMIC DNA]</scope>
    <source>
        <strain>ATCC 33913 / DSM 3586 / NCPPB 528 / LMG 568 / P 25</strain>
    </source>
</reference>
<accession>Q8PCM0</accession>
<protein>
    <recommendedName>
        <fullName evidence="1">Potassium-transporting ATPase KdpC subunit</fullName>
    </recommendedName>
    <alternativeName>
        <fullName evidence="1">ATP phosphohydrolase [potassium-transporting] C chain</fullName>
    </alternativeName>
    <alternativeName>
        <fullName evidence="1">Potassium-binding and translocating subunit C</fullName>
    </alternativeName>
    <alternativeName>
        <fullName evidence="1">Potassium-translocating ATPase C chain</fullName>
    </alternativeName>
</protein>
<dbReference type="EMBL" id="AE008922">
    <property type="protein sequence ID" value="AAM40020.1"/>
    <property type="molecule type" value="Genomic_DNA"/>
</dbReference>
<dbReference type="RefSeq" id="NP_636096.1">
    <property type="nucleotide sequence ID" value="NC_003902.1"/>
</dbReference>
<dbReference type="RefSeq" id="WP_011035943.1">
    <property type="nucleotide sequence ID" value="NC_003902.1"/>
</dbReference>
<dbReference type="SMR" id="Q8PCM0"/>
<dbReference type="STRING" id="190485.XCC0704"/>
<dbReference type="EnsemblBacteria" id="AAM40020">
    <property type="protein sequence ID" value="AAM40020"/>
    <property type="gene ID" value="XCC0704"/>
</dbReference>
<dbReference type="KEGG" id="xcc:XCC0704"/>
<dbReference type="PATRIC" id="fig|190485.4.peg.769"/>
<dbReference type="eggNOG" id="COG2156">
    <property type="taxonomic scope" value="Bacteria"/>
</dbReference>
<dbReference type="HOGENOM" id="CLU_077094_2_0_6"/>
<dbReference type="OrthoDB" id="9788285at2"/>
<dbReference type="Proteomes" id="UP000001010">
    <property type="component" value="Chromosome"/>
</dbReference>
<dbReference type="GO" id="GO:0005886">
    <property type="term" value="C:plasma membrane"/>
    <property type="evidence" value="ECO:0007669"/>
    <property type="project" value="UniProtKB-SubCell"/>
</dbReference>
<dbReference type="GO" id="GO:0005524">
    <property type="term" value="F:ATP binding"/>
    <property type="evidence" value="ECO:0007669"/>
    <property type="project" value="UniProtKB-UniRule"/>
</dbReference>
<dbReference type="GO" id="GO:0008556">
    <property type="term" value="F:P-type potassium transmembrane transporter activity"/>
    <property type="evidence" value="ECO:0000318"/>
    <property type="project" value="GO_Central"/>
</dbReference>
<dbReference type="GO" id="GO:0071805">
    <property type="term" value="P:potassium ion transmembrane transport"/>
    <property type="evidence" value="ECO:0000318"/>
    <property type="project" value="GO_Central"/>
</dbReference>
<dbReference type="HAMAP" id="MF_00276">
    <property type="entry name" value="KdpC"/>
    <property type="match status" value="1"/>
</dbReference>
<dbReference type="InterPro" id="IPR003820">
    <property type="entry name" value="KdpC"/>
</dbReference>
<dbReference type="NCBIfam" id="TIGR00681">
    <property type="entry name" value="kdpC"/>
    <property type="match status" value="1"/>
</dbReference>
<dbReference type="NCBIfam" id="NF001454">
    <property type="entry name" value="PRK00315.1"/>
    <property type="match status" value="1"/>
</dbReference>
<dbReference type="PANTHER" id="PTHR30042">
    <property type="entry name" value="POTASSIUM-TRANSPORTING ATPASE C CHAIN"/>
    <property type="match status" value="1"/>
</dbReference>
<dbReference type="PANTHER" id="PTHR30042:SF2">
    <property type="entry name" value="POTASSIUM-TRANSPORTING ATPASE KDPC SUBUNIT"/>
    <property type="match status" value="1"/>
</dbReference>
<dbReference type="Pfam" id="PF02669">
    <property type="entry name" value="KdpC"/>
    <property type="match status" value="1"/>
</dbReference>
<dbReference type="PIRSF" id="PIRSF001296">
    <property type="entry name" value="K_ATPase_KdpC"/>
    <property type="match status" value="1"/>
</dbReference>
<name>KDPC_XANCP</name>
<gene>
    <name evidence="1" type="primary">kdpC</name>
    <name type="ordered locus">XCC0704</name>
</gene>
<proteinExistence type="inferred from homology"/>